<dbReference type="EC" id="2.7.7.6" evidence="1"/>
<dbReference type="EMBL" id="AM889285">
    <property type="protein sequence ID" value="CAP57352.1"/>
    <property type="molecule type" value="Genomic_DNA"/>
</dbReference>
<dbReference type="EMBL" id="CP001189">
    <property type="protein sequence ID" value="ACI52691.1"/>
    <property type="status" value="ALT_INIT"/>
    <property type="molecule type" value="Genomic_DNA"/>
</dbReference>
<dbReference type="RefSeq" id="WP_012554687.1">
    <property type="nucleotide sequence ID" value="NC_011365.1"/>
</dbReference>
<dbReference type="SMR" id="A9H3S0"/>
<dbReference type="STRING" id="272568.GDI3409"/>
<dbReference type="KEGG" id="gdi:GDI3409"/>
<dbReference type="KEGG" id="gdj:Gdia_2961"/>
<dbReference type="eggNOG" id="COG0086">
    <property type="taxonomic scope" value="Bacteria"/>
</dbReference>
<dbReference type="HOGENOM" id="CLU_000524_3_1_5"/>
<dbReference type="OrthoDB" id="9815296at2"/>
<dbReference type="Proteomes" id="UP000001176">
    <property type="component" value="Chromosome"/>
</dbReference>
<dbReference type="GO" id="GO:0000428">
    <property type="term" value="C:DNA-directed RNA polymerase complex"/>
    <property type="evidence" value="ECO:0007669"/>
    <property type="project" value="UniProtKB-KW"/>
</dbReference>
<dbReference type="GO" id="GO:0003677">
    <property type="term" value="F:DNA binding"/>
    <property type="evidence" value="ECO:0007669"/>
    <property type="project" value="UniProtKB-UniRule"/>
</dbReference>
<dbReference type="GO" id="GO:0003899">
    <property type="term" value="F:DNA-directed RNA polymerase activity"/>
    <property type="evidence" value="ECO:0007669"/>
    <property type="project" value="UniProtKB-UniRule"/>
</dbReference>
<dbReference type="GO" id="GO:0000287">
    <property type="term" value="F:magnesium ion binding"/>
    <property type="evidence" value="ECO:0007669"/>
    <property type="project" value="UniProtKB-UniRule"/>
</dbReference>
<dbReference type="GO" id="GO:0008270">
    <property type="term" value="F:zinc ion binding"/>
    <property type="evidence" value="ECO:0007669"/>
    <property type="project" value="UniProtKB-UniRule"/>
</dbReference>
<dbReference type="GO" id="GO:0006351">
    <property type="term" value="P:DNA-templated transcription"/>
    <property type="evidence" value="ECO:0007669"/>
    <property type="project" value="UniProtKB-UniRule"/>
</dbReference>
<dbReference type="CDD" id="cd02655">
    <property type="entry name" value="RNAP_beta'_C"/>
    <property type="match status" value="1"/>
</dbReference>
<dbReference type="CDD" id="cd01609">
    <property type="entry name" value="RNAP_beta'_N"/>
    <property type="match status" value="1"/>
</dbReference>
<dbReference type="FunFam" id="1.10.40.90:FF:000001">
    <property type="entry name" value="DNA-directed RNA polymerase subunit beta"/>
    <property type="match status" value="1"/>
</dbReference>
<dbReference type="FunFam" id="4.10.860.120:FF:000001">
    <property type="entry name" value="DNA-directed RNA polymerase subunit beta"/>
    <property type="match status" value="1"/>
</dbReference>
<dbReference type="Gene3D" id="1.10.132.30">
    <property type="match status" value="1"/>
</dbReference>
<dbReference type="Gene3D" id="1.10.150.390">
    <property type="match status" value="1"/>
</dbReference>
<dbReference type="Gene3D" id="1.10.1790.20">
    <property type="match status" value="1"/>
</dbReference>
<dbReference type="Gene3D" id="1.10.40.90">
    <property type="match status" value="1"/>
</dbReference>
<dbReference type="Gene3D" id="2.40.40.20">
    <property type="match status" value="1"/>
</dbReference>
<dbReference type="Gene3D" id="2.40.50.100">
    <property type="match status" value="3"/>
</dbReference>
<dbReference type="Gene3D" id="4.10.860.120">
    <property type="entry name" value="RNA polymerase II, clamp domain"/>
    <property type="match status" value="1"/>
</dbReference>
<dbReference type="Gene3D" id="1.10.274.100">
    <property type="entry name" value="RNA polymerase Rpb1, domain 3"/>
    <property type="match status" value="2"/>
</dbReference>
<dbReference type="HAMAP" id="MF_01322">
    <property type="entry name" value="RNApol_bact_RpoC"/>
    <property type="match status" value="1"/>
</dbReference>
<dbReference type="InterPro" id="IPR045867">
    <property type="entry name" value="DNA-dir_RpoC_beta_prime"/>
</dbReference>
<dbReference type="InterPro" id="IPR012754">
    <property type="entry name" value="DNA-dir_RpoC_beta_prime_bact"/>
</dbReference>
<dbReference type="InterPro" id="IPR000722">
    <property type="entry name" value="RNA_pol_asu"/>
</dbReference>
<dbReference type="InterPro" id="IPR006592">
    <property type="entry name" value="RNA_pol_N"/>
</dbReference>
<dbReference type="InterPro" id="IPR007080">
    <property type="entry name" value="RNA_pol_Rpb1_1"/>
</dbReference>
<dbReference type="InterPro" id="IPR007066">
    <property type="entry name" value="RNA_pol_Rpb1_3"/>
</dbReference>
<dbReference type="InterPro" id="IPR042102">
    <property type="entry name" value="RNA_pol_Rpb1_3_sf"/>
</dbReference>
<dbReference type="InterPro" id="IPR007083">
    <property type="entry name" value="RNA_pol_Rpb1_4"/>
</dbReference>
<dbReference type="InterPro" id="IPR007081">
    <property type="entry name" value="RNA_pol_Rpb1_5"/>
</dbReference>
<dbReference type="InterPro" id="IPR044893">
    <property type="entry name" value="RNA_pol_Rpb1_clamp_domain"/>
</dbReference>
<dbReference type="InterPro" id="IPR038120">
    <property type="entry name" value="Rpb1_funnel_sf"/>
</dbReference>
<dbReference type="NCBIfam" id="TIGR02386">
    <property type="entry name" value="rpoC_TIGR"/>
    <property type="match status" value="1"/>
</dbReference>
<dbReference type="PANTHER" id="PTHR19376">
    <property type="entry name" value="DNA-DIRECTED RNA POLYMERASE"/>
    <property type="match status" value="1"/>
</dbReference>
<dbReference type="PANTHER" id="PTHR19376:SF54">
    <property type="entry name" value="DNA-DIRECTED RNA POLYMERASE SUBUNIT BETA"/>
    <property type="match status" value="1"/>
</dbReference>
<dbReference type="Pfam" id="PF04997">
    <property type="entry name" value="RNA_pol_Rpb1_1"/>
    <property type="match status" value="1"/>
</dbReference>
<dbReference type="Pfam" id="PF00623">
    <property type="entry name" value="RNA_pol_Rpb1_2"/>
    <property type="match status" value="2"/>
</dbReference>
<dbReference type="Pfam" id="PF04983">
    <property type="entry name" value="RNA_pol_Rpb1_3"/>
    <property type="match status" value="1"/>
</dbReference>
<dbReference type="Pfam" id="PF05000">
    <property type="entry name" value="RNA_pol_Rpb1_4"/>
    <property type="match status" value="1"/>
</dbReference>
<dbReference type="Pfam" id="PF04998">
    <property type="entry name" value="RNA_pol_Rpb1_5"/>
    <property type="match status" value="1"/>
</dbReference>
<dbReference type="SMART" id="SM00663">
    <property type="entry name" value="RPOLA_N"/>
    <property type="match status" value="1"/>
</dbReference>
<dbReference type="SUPFAM" id="SSF64484">
    <property type="entry name" value="beta and beta-prime subunits of DNA dependent RNA-polymerase"/>
    <property type="match status" value="1"/>
</dbReference>
<comment type="function">
    <text evidence="1">DNA-dependent RNA polymerase catalyzes the transcription of DNA into RNA using the four ribonucleoside triphosphates as substrates.</text>
</comment>
<comment type="catalytic activity">
    <reaction evidence="1">
        <text>RNA(n) + a ribonucleoside 5'-triphosphate = RNA(n+1) + diphosphate</text>
        <dbReference type="Rhea" id="RHEA:21248"/>
        <dbReference type="Rhea" id="RHEA-COMP:14527"/>
        <dbReference type="Rhea" id="RHEA-COMP:17342"/>
        <dbReference type="ChEBI" id="CHEBI:33019"/>
        <dbReference type="ChEBI" id="CHEBI:61557"/>
        <dbReference type="ChEBI" id="CHEBI:140395"/>
        <dbReference type="EC" id="2.7.7.6"/>
    </reaction>
</comment>
<comment type="cofactor">
    <cofactor evidence="1">
        <name>Mg(2+)</name>
        <dbReference type="ChEBI" id="CHEBI:18420"/>
    </cofactor>
    <text evidence="1">Binds 1 Mg(2+) ion per subunit.</text>
</comment>
<comment type="cofactor">
    <cofactor evidence="1">
        <name>Zn(2+)</name>
        <dbReference type="ChEBI" id="CHEBI:29105"/>
    </cofactor>
    <text evidence="1">Binds 2 Zn(2+) ions per subunit.</text>
</comment>
<comment type="subunit">
    <text evidence="1">The RNAP catalytic core consists of 2 alpha, 1 beta, 1 beta' and 1 omega subunit. When a sigma factor is associated with the core the holoenzyme is formed, which can initiate transcription.</text>
</comment>
<comment type="similarity">
    <text evidence="1">Belongs to the RNA polymerase beta' chain family.</text>
</comment>
<comment type="sequence caution" evidence="2">
    <conflict type="erroneous initiation">
        <sequence resource="EMBL-CDS" id="ACI52691"/>
    </conflict>
    <text>Truncated N-terminus.</text>
</comment>
<reference key="1">
    <citation type="journal article" date="2009" name="BMC Genomics">
        <title>Complete genome sequence of the sugarcane nitrogen-fixing endophyte Gluconacetobacter diazotrophicus Pal5.</title>
        <authorList>
            <person name="Bertalan M."/>
            <person name="Albano R."/>
            <person name="de Padua V."/>
            <person name="Rouws L."/>
            <person name="Rojas C."/>
            <person name="Hemerly A."/>
            <person name="Teixeira K."/>
            <person name="Schwab S."/>
            <person name="Araujo J."/>
            <person name="Oliveira A."/>
            <person name="Franca L."/>
            <person name="Magalhaes V."/>
            <person name="Alqueres S."/>
            <person name="Cardoso A."/>
            <person name="Almeida W."/>
            <person name="Loureiro M.M."/>
            <person name="Nogueira E."/>
            <person name="Cidade D."/>
            <person name="Oliveira D."/>
            <person name="Simao T."/>
            <person name="Macedo J."/>
            <person name="Valadao A."/>
            <person name="Dreschsel M."/>
            <person name="Freitas F."/>
            <person name="Vidal M."/>
            <person name="Guedes H."/>
            <person name="Rodrigues E."/>
            <person name="Meneses C."/>
            <person name="Brioso P."/>
            <person name="Pozzer L."/>
            <person name="Figueiredo D."/>
            <person name="Montano H."/>
            <person name="Junior J."/>
            <person name="de Souza Filho G."/>
            <person name="Martin Quintana Flores V."/>
            <person name="Ferreira B."/>
            <person name="Branco A."/>
            <person name="Gonzalez P."/>
            <person name="Guillobel H."/>
            <person name="Lemos M."/>
            <person name="Seibel L."/>
            <person name="Macedo J."/>
            <person name="Alves-Ferreira M."/>
            <person name="Sachetto-Martins G."/>
            <person name="Coelho A."/>
            <person name="Santos E."/>
            <person name="Amaral G."/>
            <person name="Neves A."/>
            <person name="Pacheco A.B."/>
            <person name="Carvalho D."/>
            <person name="Lery L."/>
            <person name="Bisch P."/>
            <person name="Rossle S.C."/>
            <person name="Urmenyi T."/>
            <person name="Rael Pereira A."/>
            <person name="Silva R."/>
            <person name="Rondinelli E."/>
            <person name="von Kruger W."/>
            <person name="Martins O."/>
            <person name="Baldani J.I."/>
            <person name="Ferreira P.C."/>
        </authorList>
    </citation>
    <scope>NUCLEOTIDE SEQUENCE [LARGE SCALE GENOMIC DNA]</scope>
    <source>
        <strain>ATCC 49037 / DSM 5601 / CCUG 37298 / CIP 103539 / LMG 7603 / PAl5</strain>
    </source>
</reference>
<reference key="2">
    <citation type="journal article" date="2010" name="Stand. Genomic Sci.">
        <title>Two genome sequences of the same bacterial strain, Gluconacetobacter diazotrophicus PAl 5, suggest a new standard in genome sequence submission.</title>
        <authorList>
            <person name="Giongo A."/>
            <person name="Tyler H.L."/>
            <person name="Zipperer U.N."/>
            <person name="Triplett E.W."/>
        </authorList>
    </citation>
    <scope>NUCLEOTIDE SEQUENCE [LARGE SCALE GENOMIC DNA]</scope>
    <source>
        <strain>ATCC 49037 / DSM 5601 / CCUG 37298 / CIP 103539 / LMG 7603 / PAl5</strain>
    </source>
</reference>
<name>RPOC_GLUDA</name>
<protein>
    <recommendedName>
        <fullName evidence="1">DNA-directed RNA polymerase subunit beta'</fullName>
        <shortName evidence="1">RNAP subunit beta'</shortName>
        <ecNumber evidence="1">2.7.7.6</ecNumber>
    </recommendedName>
    <alternativeName>
        <fullName evidence="1">RNA polymerase subunit beta'</fullName>
    </alternativeName>
    <alternativeName>
        <fullName evidence="1">Transcriptase subunit beta'</fullName>
    </alternativeName>
</protein>
<organism>
    <name type="scientific">Gluconacetobacter diazotrophicus (strain ATCC 49037 / DSM 5601 / CCUG 37298 / CIP 103539 / LMG 7603 / PAl5)</name>
    <dbReference type="NCBI Taxonomy" id="272568"/>
    <lineage>
        <taxon>Bacteria</taxon>
        <taxon>Pseudomonadati</taxon>
        <taxon>Pseudomonadota</taxon>
        <taxon>Alphaproteobacteria</taxon>
        <taxon>Acetobacterales</taxon>
        <taxon>Acetobacteraceae</taxon>
        <taxon>Gluconacetobacter</taxon>
    </lineage>
</organism>
<keyword id="KW-0240">DNA-directed RNA polymerase</keyword>
<keyword id="KW-0460">Magnesium</keyword>
<keyword id="KW-0479">Metal-binding</keyword>
<keyword id="KW-0548">Nucleotidyltransferase</keyword>
<keyword id="KW-1185">Reference proteome</keyword>
<keyword id="KW-0804">Transcription</keyword>
<keyword id="KW-0808">Transferase</keyword>
<keyword id="KW-0862">Zinc</keyword>
<feature type="chain" id="PRO_0000353375" description="DNA-directed RNA polymerase subunit beta'">
    <location>
        <begin position="1"/>
        <end position="1398"/>
    </location>
</feature>
<feature type="binding site" evidence="1">
    <location>
        <position position="73"/>
    </location>
    <ligand>
        <name>Zn(2+)</name>
        <dbReference type="ChEBI" id="CHEBI:29105"/>
        <label>1</label>
    </ligand>
</feature>
<feature type="binding site" evidence="1">
    <location>
        <position position="75"/>
    </location>
    <ligand>
        <name>Zn(2+)</name>
        <dbReference type="ChEBI" id="CHEBI:29105"/>
        <label>1</label>
    </ligand>
</feature>
<feature type="binding site" evidence="1">
    <location>
        <position position="88"/>
    </location>
    <ligand>
        <name>Zn(2+)</name>
        <dbReference type="ChEBI" id="CHEBI:29105"/>
        <label>1</label>
    </ligand>
</feature>
<feature type="binding site" evidence="1">
    <location>
        <position position="91"/>
    </location>
    <ligand>
        <name>Zn(2+)</name>
        <dbReference type="ChEBI" id="CHEBI:29105"/>
        <label>1</label>
    </ligand>
</feature>
<feature type="binding site" evidence="1">
    <location>
        <position position="464"/>
    </location>
    <ligand>
        <name>Mg(2+)</name>
        <dbReference type="ChEBI" id="CHEBI:18420"/>
    </ligand>
</feature>
<feature type="binding site" evidence="1">
    <location>
        <position position="466"/>
    </location>
    <ligand>
        <name>Mg(2+)</name>
        <dbReference type="ChEBI" id="CHEBI:18420"/>
    </ligand>
</feature>
<feature type="binding site" evidence="1">
    <location>
        <position position="468"/>
    </location>
    <ligand>
        <name>Mg(2+)</name>
        <dbReference type="ChEBI" id="CHEBI:18420"/>
    </ligand>
</feature>
<feature type="binding site" evidence="1">
    <location>
        <position position="823"/>
    </location>
    <ligand>
        <name>Zn(2+)</name>
        <dbReference type="ChEBI" id="CHEBI:29105"/>
        <label>2</label>
    </ligand>
</feature>
<feature type="binding site" evidence="1">
    <location>
        <position position="897"/>
    </location>
    <ligand>
        <name>Zn(2+)</name>
        <dbReference type="ChEBI" id="CHEBI:29105"/>
        <label>2</label>
    </ligand>
</feature>
<feature type="binding site" evidence="1">
    <location>
        <position position="904"/>
    </location>
    <ligand>
        <name>Zn(2+)</name>
        <dbReference type="ChEBI" id="CHEBI:29105"/>
        <label>2</label>
    </ligand>
</feature>
<feature type="binding site" evidence="1">
    <location>
        <position position="907"/>
    </location>
    <ligand>
        <name>Zn(2+)</name>
        <dbReference type="ChEBI" id="CHEBI:29105"/>
        <label>2</label>
    </ligand>
</feature>
<accession>A9H3S0</accession>
<accession>B5ZIF8</accession>
<evidence type="ECO:0000255" key="1">
    <source>
        <dbReference type="HAMAP-Rule" id="MF_01322"/>
    </source>
</evidence>
<evidence type="ECO:0000305" key="2"/>
<sequence length="1398" mass="155467">MRRMNELMKILGQTGQAMTFDQIKIQLASSEQIRSWSYGEIKKPETINYRTFKPERDGLFCARIFGPIKDYECLCGKYKRMKFRGIICEKCGVEVTLAKVRRERMGHIELASPVAHIWFLKSLPSRIGLMVDMTLKDLEKILYFESYVVLEPGTSPLKQFSLLTEDQYLDVMDEHGDDGIEVGIGAEAIKKVLERIDCKADKERLRQELKDTTSEAKRKKLVKRLKLIEAFADSESRPEWMIMDLIPVIPPELRPLVPLDGGRFATSDLNDLYRRVINRNNRLKRLIELRAPDIIVRNEKRMLQESVDALFDNGRRGRAITGANKRPLKSLSDMLKGKQGRFRQNLLGKRVDYSGRSVIVVGPELKLHQCGLPKKMALELFKPFIYSKLEKYGHATTIKAAKRMVEKERPEVWDILEEVIREHPVMLNRAPTLHRLGIQAFEPVLIEGKAIQLHPLVCTAFNADFDGDQMAVHVPLSLEAQLEARVLMMSTNNILSPANGKPIIVPSQDIVLGLYYLSLETPEFLATPDRNEYDAEGRLTVTGASSFATIGEVEYALSAGAIKLHDKIVARFDTVDAEGKPVRQTVITTPGRMLIAQILPRHPAIPFSLINKQLTKKNVSDVIDAVYRHCGQKECVIFCDRMMGLGFRHAAKAGISFGKDDMIIPAEKKVLVERTAAEVKEFEQQYQDGLITAGERYNKVVDAWSRCTDEVQAAMMKEISRQEVGKVTNSVWMMSHSGARGSPAQMKQLAGMRGLMAKPSGEIIEQPIIANFKEGLSVLDYFTSTHGARKGLADTALKTANSGYLTRRLVDVAQDCIIVEDDCGSERGLTVRAVMDGGEIVSSLSERILGRTVAADILDPATGEVLFKRDTLIEEAQAEKIEKAGVESVLIRSVLTCESRVGVCGLCYGRDLARGTPVNIGEAVGVIAAQSIGEPGTQLTMRTFHIGGAAQRGAEQSMVEASRDGHVTINNRTIVHNSQNVPIVMSRNCEIVLTDDKGVERARYRVPYGARLLVEEGAAVTRNQKLAEWDPYTLPIITEHSGTVEYLDLIDSITLVERMDEVTGLTSKVVVDYKQAAKGVDLRPRLQLKDANGHVIKLSNGNDARYFLSPDSLLSVENGAQVSAGDVLARIPREGSKTRDITGGLPRVAELFEARRPKDHAIISETDGRVEFGKDYKAKRRIIVKNDETGEETDYLIPKGKHVSVQEGDFVRVGDPLVDGPRVPHDILKVLGVEALSDYLVNEIQDVYRLQGVKINDKHIEVIVRQMLQKVEILEPGDTTYLIGETVDRIEFETENTKRLNMGERPAQAMPVLQGITKASLQTQSFISAASFQETTRVLTEAATAGKKDTLNGLKENVIVGRLIPAGTGSVMNKLRAIAAGQDRQRLAQARPVVSKAD</sequence>
<proteinExistence type="inferred from homology"/>
<gene>
    <name evidence="1" type="primary">rpoC</name>
    <name type="ordered locus">GDI3409</name>
    <name type="ordered locus">Gdia_2961</name>
</gene>